<evidence type="ECO:0000255" key="1">
    <source>
        <dbReference type="HAMAP-Rule" id="MF_00560"/>
    </source>
</evidence>
<comment type="function">
    <text evidence="1">Catalyzes the S-adenosylmethionine monomethyl esterification of trans-aconitate.</text>
</comment>
<comment type="catalytic activity">
    <reaction evidence="1">
        <text>trans-aconitate + S-adenosyl-L-methionine = (E)-3-(methoxycarbonyl)pent-2-enedioate + S-adenosyl-L-homocysteine</text>
        <dbReference type="Rhea" id="RHEA:14969"/>
        <dbReference type="ChEBI" id="CHEBI:15708"/>
        <dbReference type="ChEBI" id="CHEBI:57470"/>
        <dbReference type="ChEBI" id="CHEBI:57856"/>
        <dbReference type="ChEBI" id="CHEBI:59789"/>
        <dbReference type="EC" id="2.1.1.144"/>
    </reaction>
</comment>
<comment type="subcellular location">
    <subcellularLocation>
        <location evidence="1">Cytoplasm</location>
    </subcellularLocation>
</comment>
<comment type="similarity">
    <text evidence="1">Belongs to the methyltransferase superfamily. Tam family.</text>
</comment>
<gene>
    <name evidence="1" type="primary">tam</name>
    <name type="ordered locus">EFER_1555</name>
</gene>
<protein>
    <recommendedName>
        <fullName evidence="1">Trans-aconitate 2-methyltransferase</fullName>
        <ecNumber evidence="1">2.1.1.144</ecNumber>
    </recommendedName>
</protein>
<keyword id="KW-0963">Cytoplasm</keyword>
<keyword id="KW-0489">Methyltransferase</keyword>
<keyword id="KW-0949">S-adenosyl-L-methionine</keyword>
<keyword id="KW-0808">Transferase</keyword>
<feature type="chain" id="PRO_1000129258" description="Trans-aconitate 2-methyltransferase">
    <location>
        <begin position="1"/>
        <end position="252"/>
    </location>
</feature>
<reference key="1">
    <citation type="journal article" date="2009" name="PLoS Genet.">
        <title>Organised genome dynamics in the Escherichia coli species results in highly diverse adaptive paths.</title>
        <authorList>
            <person name="Touchon M."/>
            <person name="Hoede C."/>
            <person name="Tenaillon O."/>
            <person name="Barbe V."/>
            <person name="Baeriswyl S."/>
            <person name="Bidet P."/>
            <person name="Bingen E."/>
            <person name="Bonacorsi S."/>
            <person name="Bouchier C."/>
            <person name="Bouvet O."/>
            <person name="Calteau A."/>
            <person name="Chiapello H."/>
            <person name="Clermont O."/>
            <person name="Cruveiller S."/>
            <person name="Danchin A."/>
            <person name="Diard M."/>
            <person name="Dossat C."/>
            <person name="Karoui M.E."/>
            <person name="Frapy E."/>
            <person name="Garry L."/>
            <person name="Ghigo J.M."/>
            <person name="Gilles A.M."/>
            <person name="Johnson J."/>
            <person name="Le Bouguenec C."/>
            <person name="Lescat M."/>
            <person name="Mangenot S."/>
            <person name="Martinez-Jehanne V."/>
            <person name="Matic I."/>
            <person name="Nassif X."/>
            <person name="Oztas S."/>
            <person name="Petit M.A."/>
            <person name="Pichon C."/>
            <person name="Rouy Z."/>
            <person name="Ruf C.S."/>
            <person name="Schneider D."/>
            <person name="Tourret J."/>
            <person name="Vacherie B."/>
            <person name="Vallenet D."/>
            <person name="Medigue C."/>
            <person name="Rocha E.P.C."/>
            <person name="Denamur E."/>
        </authorList>
    </citation>
    <scope>NUCLEOTIDE SEQUENCE [LARGE SCALE GENOMIC DNA]</scope>
    <source>
        <strain>ATCC 35469 / DSM 13698 / BCRC 15582 / CCUG 18766 / IAM 14443 / JCM 21226 / LMG 7866 / NBRC 102419 / NCTC 12128 / CDC 0568-73</strain>
    </source>
</reference>
<accession>B7LRD2</accession>
<dbReference type="EC" id="2.1.1.144" evidence="1"/>
<dbReference type="EMBL" id="CU928158">
    <property type="protein sequence ID" value="CAQ89074.1"/>
    <property type="molecule type" value="Genomic_DNA"/>
</dbReference>
<dbReference type="RefSeq" id="WP_001286628.1">
    <property type="nucleotide sequence ID" value="NC_011740.1"/>
</dbReference>
<dbReference type="SMR" id="B7LRD2"/>
<dbReference type="GeneID" id="75057401"/>
<dbReference type="KEGG" id="efe:EFER_1555"/>
<dbReference type="HOGENOM" id="CLU_037990_5_2_6"/>
<dbReference type="OrthoDB" id="9795085at2"/>
<dbReference type="Proteomes" id="UP000000745">
    <property type="component" value="Chromosome"/>
</dbReference>
<dbReference type="GO" id="GO:0005737">
    <property type="term" value="C:cytoplasm"/>
    <property type="evidence" value="ECO:0007669"/>
    <property type="project" value="UniProtKB-SubCell"/>
</dbReference>
<dbReference type="GO" id="GO:0030798">
    <property type="term" value="F:trans-aconitate 2-methyltransferase activity"/>
    <property type="evidence" value="ECO:0007669"/>
    <property type="project" value="UniProtKB-UniRule"/>
</dbReference>
<dbReference type="GO" id="GO:0032259">
    <property type="term" value="P:methylation"/>
    <property type="evidence" value="ECO:0007669"/>
    <property type="project" value="UniProtKB-KW"/>
</dbReference>
<dbReference type="CDD" id="cd02440">
    <property type="entry name" value="AdoMet_MTases"/>
    <property type="match status" value="1"/>
</dbReference>
<dbReference type="Gene3D" id="1.10.150.290">
    <property type="entry name" value="S-adenosyl-L-methionine-dependent methyltransferases"/>
    <property type="match status" value="1"/>
</dbReference>
<dbReference type="Gene3D" id="3.40.50.150">
    <property type="entry name" value="Vaccinia Virus protein VP39"/>
    <property type="match status" value="1"/>
</dbReference>
<dbReference type="HAMAP" id="MF_00560">
    <property type="entry name" value="Tran_acon_Me_trans"/>
    <property type="match status" value="1"/>
</dbReference>
<dbReference type="InterPro" id="IPR041698">
    <property type="entry name" value="Methyltransf_25"/>
</dbReference>
<dbReference type="InterPro" id="IPR029063">
    <property type="entry name" value="SAM-dependent_MTases_sf"/>
</dbReference>
<dbReference type="InterPro" id="IPR023506">
    <property type="entry name" value="Trans-aconitate_MeTrfase"/>
</dbReference>
<dbReference type="InterPro" id="IPR023149">
    <property type="entry name" value="Trans_acon_MeTrfase_C"/>
</dbReference>
<dbReference type="NCBIfam" id="NF002463">
    <property type="entry name" value="PRK01683.1"/>
    <property type="match status" value="1"/>
</dbReference>
<dbReference type="PANTHER" id="PTHR43861:SF1">
    <property type="entry name" value="TRANS-ACONITATE 2-METHYLTRANSFERASE"/>
    <property type="match status" value="1"/>
</dbReference>
<dbReference type="PANTHER" id="PTHR43861">
    <property type="entry name" value="TRANS-ACONITATE 2-METHYLTRANSFERASE-RELATED"/>
    <property type="match status" value="1"/>
</dbReference>
<dbReference type="Pfam" id="PF13649">
    <property type="entry name" value="Methyltransf_25"/>
    <property type="match status" value="1"/>
</dbReference>
<dbReference type="SUPFAM" id="SSF53335">
    <property type="entry name" value="S-adenosyl-L-methionine-dependent methyltransferases"/>
    <property type="match status" value="1"/>
</dbReference>
<sequence>MSDWTPSLYLHFAAERSRPAVELLARVPLENIEYVADLGCGPGNSTALLHHRWPAARITGIDSSPAMIAEARSALPDCQFVEADIRNWQPKQALDLIFANASLQWLPDHYELFPHLVSLLSPQGVLAVQMPDNWLEPTHVLMREVAWEQNYPDRGREPLAGVHAYYDILSEAGCEVDIWRTTYYHQMPSHQAIIDWVTATGLRPWLQDLTESEQQHFLTRYHQMLEEQYPLQENGQILLAFPRLFIVARRTE</sequence>
<proteinExistence type="inferred from homology"/>
<organism>
    <name type="scientific">Escherichia fergusonii (strain ATCC 35469 / DSM 13698 / CCUG 18766 / IAM 14443 / JCM 21226 / LMG 7866 / NBRC 102419 / NCTC 12128 / CDC 0568-73)</name>
    <dbReference type="NCBI Taxonomy" id="585054"/>
    <lineage>
        <taxon>Bacteria</taxon>
        <taxon>Pseudomonadati</taxon>
        <taxon>Pseudomonadota</taxon>
        <taxon>Gammaproteobacteria</taxon>
        <taxon>Enterobacterales</taxon>
        <taxon>Enterobacteriaceae</taxon>
        <taxon>Escherichia</taxon>
    </lineage>
</organism>
<name>TAM_ESCF3</name>